<protein>
    <recommendedName>
        <fullName evidence="1">L-lactate dehydrogenase 1</fullName>
        <shortName evidence="1">L-LDH 1</shortName>
        <ecNumber evidence="1">1.1.1.27</ecNumber>
    </recommendedName>
</protein>
<evidence type="ECO:0000255" key="1">
    <source>
        <dbReference type="HAMAP-Rule" id="MF_00488"/>
    </source>
</evidence>
<evidence type="ECO:0000305" key="2">
    <source ref="2"/>
</evidence>
<evidence type="ECO:0007829" key="3">
    <source>
        <dbReference type="PDB" id="4LN1"/>
    </source>
</evidence>
<proteinExistence type="evidence at protein level"/>
<accession>Q81EP4</accession>
<gene>
    <name evidence="1" type="primary">ldh1</name>
    <name type="ordered locus">BC_1924</name>
</gene>
<feature type="chain" id="PRO_0000168321" description="L-lactate dehydrogenase 1">
    <location>
        <begin position="1"/>
        <end position="314"/>
    </location>
</feature>
<feature type="active site" description="Proton acceptor" evidence="1">
    <location>
        <position position="178"/>
    </location>
</feature>
<feature type="binding site" evidence="1">
    <location>
        <position position="16"/>
    </location>
    <ligand>
        <name>NAD(+)</name>
        <dbReference type="ChEBI" id="CHEBI:57540"/>
    </ligand>
</feature>
<feature type="binding site" evidence="1">
    <location>
        <position position="37"/>
    </location>
    <ligand>
        <name>NAD(+)</name>
        <dbReference type="ChEBI" id="CHEBI:57540"/>
    </ligand>
</feature>
<feature type="binding site" evidence="1">
    <location>
        <position position="42"/>
    </location>
    <ligand>
        <name>NAD(+)</name>
        <dbReference type="ChEBI" id="CHEBI:57540"/>
    </ligand>
</feature>
<feature type="binding site" evidence="1">
    <location>
        <position position="68"/>
    </location>
    <ligand>
        <name>NAD(+)</name>
        <dbReference type="ChEBI" id="CHEBI:57540"/>
    </ligand>
</feature>
<feature type="binding site" evidence="1">
    <location>
        <begin position="82"/>
        <end position="83"/>
    </location>
    <ligand>
        <name>NAD(+)</name>
        <dbReference type="ChEBI" id="CHEBI:57540"/>
    </ligand>
</feature>
<feature type="binding site" evidence="1">
    <location>
        <position position="85"/>
    </location>
    <ligand>
        <name>substrate</name>
    </ligand>
</feature>
<feature type="binding site" evidence="1">
    <location>
        <position position="91"/>
    </location>
    <ligand>
        <name>substrate</name>
    </ligand>
</feature>
<feature type="binding site" evidence="1">
    <location>
        <begin position="121"/>
        <end position="123"/>
    </location>
    <ligand>
        <name>NAD(+)</name>
        <dbReference type="ChEBI" id="CHEBI:57540"/>
    </ligand>
</feature>
<feature type="binding site" evidence="1">
    <location>
        <begin position="123"/>
        <end position="126"/>
    </location>
    <ligand>
        <name>substrate</name>
    </ligand>
</feature>
<feature type="binding site" evidence="1">
    <location>
        <position position="146"/>
    </location>
    <ligand>
        <name>NAD(+)</name>
        <dbReference type="ChEBI" id="CHEBI:57540"/>
    </ligand>
</feature>
<feature type="binding site" evidence="1">
    <location>
        <begin position="151"/>
        <end position="154"/>
    </location>
    <ligand>
        <name>substrate</name>
    </ligand>
</feature>
<feature type="binding site" evidence="1">
    <location>
        <position position="156"/>
    </location>
    <ligand>
        <name>beta-D-fructose 1,6-bisphosphate</name>
        <dbReference type="ChEBI" id="CHEBI:32966"/>
        <note>allosteric activator</note>
    </ligand>
</feature>
<feature type="binding site" evidence="1">
    <location>
        <position position="171"/>
    </location>
    <ligand>
        <name>beta-D-fructose 1,6-bisphosphate</name>
        <dbReference type="ChEBI" id="CHEBI:32966"/>
        <note>allosteric activator</note>
    </ligand>
</feature>
<feature type="binding site" evidence="1">
    <location>
        <position position="232"/>
    </location>
    <ligand>
        <name>substrate</name>
    </ligand>
</feature>
<feature type="modified residue" description="Phosphotyrosine" evidence="1">
    <location>
        <position position="223"/>
    </location>
</feature>
<feature type="strand" evidence="3">
    <location>
        <begin position="7"/>
        <end position="11"/>
    </location>
</feature>
<feature type="helix" evidence="3">
    <location>
        <begin position="15"/>
        <end position="26"/>
    </location>
</feature>
<feature type="strand" evidence="3">
    <location>
        <begin position="31"/>
        <end position="36"/>
    </location>
</feature>
<feature type="helix" evidence="3">
    <location>
        <begin position="40"/>
        <end position="51"/>
    </location>
</feature>
<feature type="helix" evidence="3">
    <location>
        <begin position="52"/>
        <end position="56"/>
    </location>
</feature>
<feature type="strand" evidence="3">
    <location>
        <begin position="57"/>
        <end position="59"/>
    </location>
</feature>
<feature type="strand" evidence="3">
    <location>
        <begin position="62"/>
        <end position="65"/>
    </location>
</feature>
<feature type="helix" evidence="3">
    <location>
        <begin position="68"/>
        <end position="71"/>
    </location>
</feature>
<feature type="strand" evidence="3">
    <location>
        <begin position="75"/>
        <end position="79"/>
    </location>
</feature>
<feature type="helix" evidence="3">
    <location>
        <begin position="91"/>
        <end position="111"/>
    </location>
</feature>
<feature type="strand" evidence="3">
    <location>
        <begin position="116"/>
        <end position="120"/>
    </location>
</feature>
<feature type="strand" evidence="3">
    <location>
        <begin position="122"/>
        <end position="124"/>
    </location>
</feature>
<feature type="helix" evidence="3">
    <location>
        <begin position="125"/>
        <end position="136"/>
    </location>
</feature>
<feature type="helix" evidence="3">
    <location>
        <begin position="140"/>
        <end position="142"/>
    </location>
</feature>
<feature type="strand" evidence="3">
    <location>
        <begin position="143"/>
        <end position="145"/>
    </location>
</feature>
<feature type="helix" evidence="3">
    <location>
        <begin position="149"/>
        <end position="163"/>
    </location>
</feature>
<feature type="helix" evidence="3">
    <location>
        <begin position="167"/>
        <end position="169"/>
    </location>
</feature>
<feature type="strand" evidence="3">
    <location>
        <begin position="174"/>
        <end position="179"/>
    </location>
</feature>
<feature type="helix" evidence="3">
    <location>
        <begin position="186"/>
        <end position="188"/>
    </location>
</feature>
<feature type="helix" evidence="3">
    <location>
        <begin position="196"/>
        <end position="201"/>
    </location>
</feature>
<feature type="strand" evidence="3">
    <location>
        <begin position="202"/>
        <end position="204"/>
    </location>
</feature>
<feature type="helix" evidence="3">
    <location>
        <begin position="208"/>
        <end position="219"/>
    </location>
</feature>
<feature type="helix" evidence="3">
    <location>
        <begin position="221"/>
        <end position="229"/>
    </location>
</feature>
<feature type="helix" evidence="3">
    <location>
        <begin position="234"/>
        <end position="248"/>
    </location>
</feature>
<feature type="strand" evidence="3">
    <location>
        <begin position="253"/>
        <end position="263"/>
    </location>
</feature>
<feature type="helix" evidence="3">
    <location>
        <begin position="264"/>
        <end position="266"/>
    </location>
</feature>
<feature type="strand" evidence="3">
    <location>
        <begin position="268"/>
        <end position="279"/>
    </location>
</feature>
<feature type="strand" evidence="3">
    <location>
        <begin position="282"/>
        <end position="286"/>
    </location>
</feature>
<feature type="helix" evidence="3">
    <location>
        <begin position="293"/>
        <end position="310"/>
    </location>
</feature>
<feature type="turn" evidence="3">
    <location>
        <begin position="311"/>
        <end position="313"/>
    </location>
</feature>
<organism>
    <name type="scientific">Bacillus cereus (strain ATCC 14579 / DSM 31 / CCUG 7414 / JCM 2152 / NBRC 15305 / NCIMB 9373 / NCTC 2599 / NRRL B-3711)</name>
    <dbReference type="NCBI Taxonomy" id="226900"/>
    <lineage>
        <taxon>Bacteria</taxon>
        <taxon>Bacillati</taxon>
        <taxon>Bacillota</taxon>
        <taxon>Bacilli</taxon>
        <taxon>Bacillales</taxon>
        <taxon>Bacillaceae</taxon>
        <taxon>Bacillus</taxon>
        <taxon>Bacillus cereus group</taxon>
    </lineage>
</organism>
<comment type="function">
    <text evidence="1">Catalyzes the conversion of lactate to pyruvate.</text>
</comment>
<comment type="catalytic activity">
    <reaction evidence="1">
        <text>(S)-lactate + NAD(+) = pyruvate + NADH + H(+)</text>
        <dbReference type="Rhea" id="RHEA:23444"/>
        <dbReference type="ChEBI" id="CHEBI:15361"/>
        <dbReference type="ChEBI" id="CHEBI:15378"/>
        <dbReference type="ChEBI" id="CHEBI:16651"/>
        <dbReference type="ChEBI" id="CHEBI:57540"/>
        <dbReference type="ChEBI" id="CHEBI:57945"/>
        <dbReference type="EC" id="1.1.1.27"/>
    </reaction>
</comment>
<comment type="activity regulation">
    <text evidence="1">Allosterically activated by fructose 1,6-bisphosphate (FBP).</text>
</comment>
<comment type="pathway">
    <text evidence="1">Fermentation; pyruvate fermentation to lactate; (S)-lactate from pyruvate: step 1/1.</text>
</comment>
<comment type="subunit">
    <text evidence="1 2">Homotetramer.</text>
</comment>
<comment type="subcellular location">
    <subcellularLocation>
        <location evidence="1">Cytoplasm</location>
    </subcellularLocation>
</comment>
<comment type="similarity">
    <text evidence="1">Belongs to the LDH/MDH superfamily. LDH family.</text>
</comment>
<reference key="1">
    <citation type="journal article" date="2003" name="Nature">
        <title>Genome sequence of Bacillus cereus and comparative analysis with Bacillus anthracis.</title>
        <authorList>
            <person name="Ivanova N."/>
            <person name="Sorokin A."/>
            <person name="Anderson I."/>
            <person name="Galleron N."/>
            <person name="Candelon B."/>
            <person name="Kapatral V."/>
            <person name="Bhattacharyya A."/>
            <person name="Reznik G."/>
            <person name="Mikhailova N."/>
            <person name="Lapidus A."/>
            <person name="Chu L."/>
            <person name="Mazur M."/>
            <person name="Goltsman E."/>
            <person name="Larsen N."/>
            <person name="D'Souza M."/>
            <person name="Walunas T."/>
            <person name="Grechkin Y."/>
            <person name="Pusch G."/>
            <person name="Haselkorn R."/>
            <person name="Fonstein M."/>
            <person name="Ehrlich S.D."/>
            <person name="Overbeek R."/>
            <person name="Kyrpides N.C."/>
        </authorList>
    </citation>
    <scope>NUCLEOTIDE SEQUENCE [LARGE SCALE GENOMIC DNA]</scope>
    <source>
        <strain>ATCC 14579 / DSM 31 / CCUG 7414 / JCM 2152 / NBRC 15305 / NCIMB 9373 / NCTC 2599 / NRRL B-3711</strain>
    </source>
</reference>
<reference key="2">
    <citation type="submission" date="2013-07" db="PDB data bank">
        <title>Crystal structure of L-lactate dehydrogenase from Bacillus cereus ATCC 14579 complexed with calcium, NYSGRC Target 029452.</title>
        <authorList>
            <person name="Malashkevich V.N."/>
            <person name="Bonanno J.B."/>
            <person name="Bhosle R."/>
            <person name="Toro R."/>
            <person name="Hillerich B."/>
            <person name="Gizzi A."/>
            <person name="Garforth S."/>
            <person name="Kar A."/>
            <person name="Chan M.K."/>
            <person name="Lafluer J."/>
            <person name="Patel H."/>
            <person name="Matikainen B."/>
            <person name="Chamala S."/>
            <person name="Lim S."/>
            <person name="Celikgil A."/>
            <person name="Villegas G."/>
            <person name="Evans B."/>
            <person name="Love J."/>
            <person name="Fiser A."/>
            <person name="Khafizov K."/>
            <person name="Seidel R."/>
            <person name="Almo S.C."/>
        </authorList>
    </citation>
    <scope>X-RAY CRYSTALLOGRAPHY (1.90 ANGSTROMS)</scope>
    <scope>SUBUNIT</scope>
</reference>
<keyword id="KW-0002">3D-structure</keyword>
<keyword id="KW-0021">Allosteric enzyme</keyword>
<keyword id="KW-0963">Cytoplasm</keyword>
<keyword id="KW-0520">NAD</keyword>
<keyword id="KW-0560">Oxidoreductase</keyword>
<keyword id="KW-0597">Phosphoprotein</keyword>
<keyword id="KW-1185">Reference proteome</keyword>
<name>LDH1_BACCR</name>
<dbReference type="EC" id="1.1.1.27" evidence="1"/>
<dbReference type="EMBL" id="AE016877">
    <property type="protein sequence ID" value="AAP08895.1"/>
    <property type="molecule type" value="Genomic_DNA"/>
</dbReference>
<dbReference type="RefSeq" id="NP_831694.1">
    <property type="nucleotide sequence ID" value="NC_004722.1"/>
</dbReference>
<dbReference type="RefSeq" id="WP_000715321.1">
    <property type="nucleotide sequence ID" value="NZ_CP138336.1"/>
</dbReference>
<dbReference type="PDB" id="4LMR">
    <property type="method" value="X-ray"/>
    <property type="resolution" value="2.45 A"/>
    <property type="chains" value="A/B=1-314"/>
</dbReference>
<dbReference type="PDB" id="4LN1">
    <property type="method" value="X-ray"/>
    <property type="resolution" value="1.90 A"/>
    <property type="chains" value="A/B/C/D=1-314"/>
</dbReference>
<dbReference type="PDBsum" id="4LMR"/>
<dbReference type="PDBsum" id="4LN1"/>
<dbReference type="SMR" id="Q81EP4"/>
<dbReference type="STRING" id="226900.BC_1924"/>
<dbReference type="KEGG" id="bce:BC1924"/>
<dbReference type="PATRIC" id="fig|226900.8.peg.1927"/>
<dbReference type="HOGENOM" id="CLU_045401_1_1_9"/>
<dbReference type="OrthoDB" id="9802969at2"/>
<dbReference type="UniPathway" id="UPA00554">
    <property type="reaction ID" value="UER00611"/>
</dbReference>
<dbReference type="EvolutionaryTrace" id="Q81EP4"/>
<dbReference type="Proteomes" id="UP000001417">
    <property type="component" value="Chromosome"/>
</dbReference>
<dbReference type="GO" id="GO:0005737">
    <property type="term" value="C:cytoplasm"/>
    <property type="evidence" value="ECO:0007669"/>
    <property type="project" value="UniProtKB-SubCell"/>
</dbReference>
<dbReference type="GO" id="GO:0004459">
    <property type="term" value="F:L-lactate dehydrogenase activity"/>
    <property type="evidence" value="ECO:0000318"/>
    <property type="project" value="GO_Central"/>
</dbReference>
<dbReference type="GO" id="GO:0006096">
    <property type="term" value="P:glycolytic process"/>
    <property type="evidence" value="ECO:0007669"/>
    <property type="project" value="UniProtKB-UniRule"/>
</dbReference>
<dbReference type="GO" id="GO:0006089">
    <property type="term" value="P:lactate metabolic process"/>
    <property type="evidence" value="ECO:0000318"/>
    <property type="project" value="GO_Central"/>
</dbReference>
<dbReference type="GO" id="GO:0006090">
    <property type="term" value="P:pyruvate metabolic process"/>
    <property type="evidence" value="ECO:0000318"/>
    <property type="project" value="GO_Central"/>
</dbReference>
<dbReference type="CDD" id="cd05291">
    <property type="entry name" value="HicDH_like"/>
    <property type="match status" value="1"/>
</dbReference>
<dbReference type="FunFam" id="3.90.110.10:FF:000005">
    <property type="entry name" value="L-lactate dehydrogenase"/>
    <property type="match status" value="1"/>
</dbReference>
<dbReference type="FunFam" id="3.40.50.720:FF:000018">
    <property type="entry name" value="Malate dehydrogenase"/>
    <property type="match status" value="1"/>
</dbReference>
<dbReference type="Gene3D" id="3.90.110.10">
    <property type="entry name" value="Lactate dehydrogenase/glycoside hydrolase, family 4, C-terminal"/>
    <property type="match status" value="1"/>
</dbReference>
<dbReference type="Gene3D" id="3.40.50.720">
    <property type="entry name" value="NAD(P)-binding Rossmann-like Domain"/>
    <property type="match status" value="1"/>
</dbReference>
<dbReference type="HAMAP" id="MF_00488">
    <property type="entry name" value="Lactate_dehydrog"/>
    <property type="match status" value="1"/>
</dbReference>
<dbReference type="InterPro" id="IPR001557">
    <property type="entry name" value="L-lactate/malate_DH"/>
</dbReference>
<dbReference type="InterPro" id="IPR011304">
    <property type="entry name" value="L-lactate_DH"/>
</dbReference>
<dbReference type="InterPro" id="IPR018177">
    <property type="entry name" value="L-lactate_DH_AS"/>
</dbReference>
<dbReference type="InterPro" id="IPR022383">
    <property type="entry name" value="Lactate/malate_DH_C"/>
</dbReference>
<dbReference type="InterPro" id="IPR001236">
    <property type="entry name" value="Lactate/malate_DH_N"/>
</dbReference>
<dbReference type="InterPro" id="IPR015955">
    <property type="entry name" value="Lactate_DH/Glyco_Ohase_4_C"/>
</dbReference>
<dbReference type="InterPro" id="IPR036291">
    <property type="entry name" value="NAD(P)-bd_dom_sf"/>
</dbReference>
<dbReference type="NCBIfam" id="TIGR01771">
    <property type="entry name" value="L-LDH-NAD"/>
    <property type="match status" value="1"/>
</dbReference>
<dbReference type="NCBIfam" id="NF000824">
    <property type="entry name" value="PRK00066.1"/>
    <property type="match status" value="1"/>
</dbReference>
<dbReference type="NCBIfam" id="NF004863">
    <property type="entry name" value="PRK06223.1"/>
    <property type="match status" value="1"/>
</dbReference>
<dbReference type="PANTHER" id="PTHR43128">
    <property type="entry name" value="L-2-HYDROXYCARBOXYLATE DEHYDROGENASE (NAD(P)(+))"/>
    <property type="match status" value="1"/>
</dbReference>
<dbReference type="PANTHER" id="PTHR43128:SF16">
    <property type="entry name" value="L-LACTATE DEHYDROGENASE"/>
    <property type="match status" value="1"/>
</dbReference>
<dbReference type="Pfam" id="PF02866">
    <property type="entry name" value="Ldh_1_C"/>
    <property type="match status" value="1"/>
</dbReference>
<dbReference type="Pfam" id="PF00056">
    <property type="entry name" value="Ldh_1_N"/>
    <property type="match status" value="1"/>
</dbReference>
<dbReference type="PIRSF" id="PIRSF000102">
    <property type="entry name" value="Lac_mal_DH"/>
    <property type="match status" value="1"/>
</dbReference>
<dbReference type="PRINTS" id="PR00086">
    <property type="entry name" value="LLDHDRGNASE"/>
</dbReference>
<dbReference type="SUPFAM" id="SSF56327">
    <property type="entry name" value="LDH C-terminal domain-like"/>
    <property type="match status" value="1"/>
</dbReference>
<dbReference type="SUPFAM" id="SSF51735">
    <property type="entry name" value="NAD(P)-binding Rossmann-fold domains"/>
    <property type="match status" value="1"/>
</dbReference>
<dbReference type="PROSITE" id="PS00064">
    <property type="entry name" value="L_LDH"/>
    <property type="match status" value="1"/>
</dbReference>
<sequence length="314" mass="34789">MKKGINRVVLVGTGAVGCSYAYCMINQAVAEEFVLVDVNEAKAEGEAMDLSHAVPFAPAPTRVWKGSYEDCKDADLVVITAGLPQKPGETRLDLVEKNAKIFKQIVRSIMDSGFDGIFLIATNPVDILTYVTWKESGLPKERVIGSGTTLDSARFRYMLGEYFDIGPHNIHAYIIGEHGDTELPVWSHVSVGIQKLQTLLEKDNTYNQEDLDKIFINVRDAAYHIIERKGATYYGIGMSLLRVTKAILNDENSVLTVSAYLEGQYGQKDVYIGVPAVLNRGGVREILEVELSEDEELKFDHSVQVLKETMAPVL</sequence>